<geneLocation type="mitochondrion"/>
<protein>
    <recommendedName>
        <fullName>Cytochrome c oxidase subunit 2</fullName>
        <ecNumber>7.1.1.9</ecNumber>
    </recommendedName>
    <alternativeName>
        <fullName>Cytochrome c oxidase polypeptide II</fullName>
    </alternativeName>
</protein>
<organism>
    <name type="scientific">Formosania lacustris</name>
    <name type="common">Oriental stream loach</name>
    <name type="synonym">Crossostoma lacustre</name>
    <dbReference type="NCBI Taxonomy" id="7980"/>
    <lineage>
        <taxon>Eukaryota</taxon>
        <taxon>Metazoa</taxon>
        <taxon>Chordata</taxon>
        <taxon>Craniata</taxon>
        <taxon>Vertebrata</taxon>
        <taxon>Euteleostomi</taxon>
        <taxon>Actinopterygii</taxon>
        <taxon>Neopterygii</taxon>
        <taxon>Teleostei</taxon>
        <taxon>Ostariophysi</taxon>
        <taxon>Cypriniformes</taxon>
        <taxon>Gastromyzontidae</taxon>
        <taxon>Formosania</taxon>
    </lineage>
</organism>
<comment type="function">
    <text evidence="2">Component of the cytochrome c oxidase, the last enzyme in the mitochondrial electron transport chain which drives oxidative phosphorylation. The respiratory chain contains 3 multisubunit complexes succinate dehydrogenase (complex II, CII), ubiquinol-cytochrome c oxidoreductase (cytochrome b-c1 complex, complex III, CIII) and cytochrome c oxidase (complex IV, CIV), that cooperate to transfer electrons derived from NADH and succinate to molecular oxygen, creating an electrochemical gradient over the inner membrane that drives transmembrane transport and the ATP synthase. Cytochrome c oxidase is the component of the respiratory chain that catalyzes the reduction of oxygen to water. Electrons originating from reduced cytochrome c in the intermembrane space (IMS) are transferred via the dinuclear copper A center (CU(A)) of subunit 2 and heme A of subunit 1 to the active site in subunit 1, a binuclear center (BNC) formed by heme A3 and copper B (CU(B)). The BNC reduces molecular oxygen to 2 water molecules using 4 electrons from cytochrome c in the IMS and 4 protons from the mitochondrial matrix.</text>
</comment>
<comment type="catalytic activity">
    <reaction evidence="2">
        <text>4 Fe(II)-[cytochrome c] + O2 + 8 H(+)(in) = 4 Fe(III)-[cytochrome c] + 2 H2O + 4 H(+)(out)</text>
        <dbReference type="Rhea" id="RHEA:11436"/>
        <dbReference type="Rhea" id="RHEA-COMP:10350"/>
        <dbReference type="Rhea" id="RHEA-COMP:14399"/>
        <dbReference type="ChEBI" id="CHEBI:15377"/>
        <dbReference type="ChEBI" id="CHEBI:15378"/>
        <dbReference type="ChEBI" id="CHEBI:15379"/>
        <dbReference type="ChEBI" id="CHEBI:29033"/>
        <dbReference type="ChEBI" id="CHEBI:29034"/>
        <dbReference type="EC" id="7.1.1.9"/>
    </reaction>
    <physiologicalReaction direction="left-to-right" evidence="2">
        <dbReference type="Rhea" id="RHEA:11437"/>
    </physiologicalReaction>
</comment>
<comment type="cofactor">
    <cofactor evidence="3">
        <name>Cu cation</name>
        <dbReference type="ChEBI" id="CHEBI:23378"/>
    </cofactor>
    <text evidence="3">Binds a dinuclear copper A center per subunit.</text>
</comment>
<comment type="subunit">
    <text evidence="1 3">Component of the cytochrome c oxidase (complex IV, CIV), a multisubunit enzyme composed of 14 subunits. The complex is composed of a catalytic core of 3 subunits MT-CO1, MT-CO2 and MT-CO3, encoded in the mitochondrial DNA, and 11 supernumerary subunits COX4I, COX5A, COX5B, COX6A, COX6B, COX6C, COX7A, COX7B, COX7C, COX8 and NDUFA4, which are encoded in the nuclear genome. The complex exists as a monomer or a dimer and forms supercomplexes (SCs) in the inner mitochondrial membrane with NADH-ubiquinone oxidoreductase (complex I, CI) and ubiquinol-cytochrome c oxidoreductase (cytochrome b-c1 complex, complex III, CIII), resulting in different assemblies (supercomplex SCI(1)III(2)IV(1) and megacomplex MCI(2)III(2)IV(2)) (By similarity). Found in a complex with TMEM177, COA6, COX18, COX20, SCO1 and SCO2. Interacts with TMEM177 in a COX20-dependent manner. Interacts with COX20. Interacts with COX16 (By similarity).</text>
</comment>
<comment type="subcellular location">
    <subcellularLocation>
        <location evidence="3">Mitochondrion inner membrane</location>
        <topology evidence="3">Multi-pass membrane protein</topology>
    </subcellularLocation>
</comment>
<comment type="similarity">
    <text evidence="4">Belongs to the cytochrome c oxidase subunit 2 family.</text>
</comment>
<dbReference type="EC" id="7.1.1.9"/>
<dbReference type="EMBL" id="M91245">
    <property type="protein sequence ID" value="AAB96814.1"/>
    <property type="molecule type" value="Genomic_DNA"/>
</dbReference>
<dbReference type="PIR" id="S35465">
    <property type="entry name" value="S35465"/>
</dbReference>
<dbReference type="SMR" id="P34189"/>
<dbReference type="CTD" id="4513"/>
<dbReference type="GO" id="GO:0005743">
    <property type="term" value="C:mitochondrial inner membrane"/>
    <property type="evidence" value="ECO:0007669"/>
    <property type="project" value="UniProtKB-SubCell"/>
</dbReference>
<dbReference type="GO" id="GO:0045277">
    <property type="term" value="C:respiratory chain complex IV"/>
    <property type="evidence" value="ECO:0000250"/>
    <property type="project" value="UniProtKB"/>
</dbReference>
<dbReference type="GO" id="GO:0005507">
    <property type="term" value="F:copper ion binding"/>
    <property type="evidence" value="ECO:0007669"/>
    <property type="project" value="InterPro"/>
</dbReference>
<dbReference type="GO" id="GO:0004129">
    <property type="term" value="F:cytochrome-c oxidase activity"/>
    <property type="evidence" value="ECO:0007669"/>
    <property type="project" value="UniProtKB-EC"/>
</dbReference>
<dbReference type="GO" id="GO:0042773">
    <property type="term" value="P:ATP synthesis coupled electron transport"/>
    <property type="evidence" value="ECO:0007669"/>
    <property type="project" value="TreeGrafter"/>
</dbReference>
<dbReference type="CDD" id="cd13912">
    <property type="entry name" value="CcO_II_C"/>
    <property type="match status" value="1"/>
</dbReference>
<dbReference type="FunFam" id="1.10.287.90:FF:000001">
    <property type="entry name" value="Cytochrome c oxidase subunit 2"/>
    <property type="match status" value="1"/>
</dbReference>
<dbReference type="FunFam" id="2.60.40.420:FF:000001">
    <property type="entry name" value="Cytochrome c oxidase subunit 2"/>
    <property type="match status" value="1"/>
</dbReference>
<dbReference type="Gene3D" id="1.10.287.90">
    <property type="match status" value="1"/>
</dbReference>
<dbReference type="Gene3D" id="2.60.40.420">
    <property type="entry name" value="Cupredoxins - blue copper proteins"/>
    <property type="match status" value="1"/>
</dbReference>
<dbReference type="InterPro" id="IPR045187">
    <property type="entry name" value="CcO_II"/>
</dbReference>
<dbReference type="InterPro" id="IPR002429">
    <property type="entry name" value="CcO_II-like_C"/>
</dbReference>
<dbReference type="InterPro" id="IPR034210">
    <property type="entry name" value="CcO_II_C"/>
</dbReference>
<dbReference type="InterPro" id="IPR001505">
    <property type="entry name" value="Copper_CuA"/>
</dbReference>
<dbReference type="InterPro" id="IPR008972">
    <property type="entry name" value="Cupredoxin"/>
</dbReference>
<dbReference type="InterPro" id="IPR014222">
    <property type="entry name" value="Cyt_c_oxidase_su2"/>
</dbReference>
<dbReference type="InterPro" id="IPR011759">
    <property type="entry name" value="Cyt_c_oxidase_su2_TM_dom"/>
</dbReference>
<dbReference type="InterPro" id="IPR036257">
    <property type="entry name" value="Cyt_c_oxidase_su2_TM_sf"/>
</dbReference>
<dbReference type="NCBIfam" id="TIGR02866">
    <property type="entry name" value="CoxB"/>
    <property type="match status" value="1"/>
</dbReference>
<dbReference type="PANTHER" id="PTHR22888:SF9">
    <property type="entry name" value="CYTOCHROME C OXIDASE SUBUNIT 2"/>
    <property type="match status" value="1"/>
</dbReference>
<dbReference type="PANTHER" id="PTHR22888">
    <property type="entry name" value="CYTOCHROME C OXIDASE, SUBUNIT II"/>
    <property type="match status" value="1"/>
</dbReference>
<dbReference type="Pfam" id="PF00116">
    <property type="entry name" value="COX2"/>
    <property type="match status" value="1"/>
</dbReference>
<dbReference type="Pfam" id="PF02790">
    <property type="entry name" value="COX2_TM"/>
    <property type="match status" value="1"/>
</dbReference>
<dbReference type="PRINTS" id="PR01166">
    <property type="entry name" value="CYCOXIDASEII"/>
</dbReference>
<dbReference type="SUPFAM" id="SSF49503">
    <property type="entry name" value="Cupredoxins"/>
    <property type="match status" value="1"/>
</dbReference>
<dbReference type="SUPFAM" id="SSF81464">
    <property type="entry name" value="Cytochrome c oxidase subunit II-like, transmembrane region"/>
    <property type="match status" value="1"/>
</dbReference>
<dbReference type="PROSITE" id="PS00078">
    <property type="entry name" value="COX2"/>
    <property type="match status" value="1"/>
</dbReference>
<dbReference type="PROSITE" id="PS50857">
    <property type="entry name" value="COX2_CUA"/>
    <property type="match status" value="1"/>
</dbReference>
<dbReference type="PROSITE" id="PS50999">
    <property type="entry name" value="COX2_TM"/>
    <property type="match status" value="1"/>
</dbReference>
<reference key="1">
    <citation type="journal article" date="1992" name="Nucleic Acids Res.">
        <title>The complete nucleotide sequence of the Crossostoma lacustre mitochondrial genome: conservation and variations among vertebrates.</title>
        <authorList>
            <person name="Tzeng C.-S."/>
            <person name="Hui C.-F."/>
            <person name="Shen S.-C."/>
            <person name="Huang P.C."/>
        </authorList>
    </citation>
    <scope>NUCLEOTIDE SEQUENCE [GENOMIC DNA]</scope>
</reference>
<feature type="chain" id="PRO_0000183558" description="Cytochrome c oxidase subunit 2">
    <location>
        <begin position="1"/>
        <end position="230"/>
    </location>
</feature>
<feature type="topological domain" description="Mitochondrial intermembrane" evidence="3">
    <location>
        <begin position="1"/>
        <end position="14"/>
    </location>
</feature>
<feature type="transmembrane region" description="Helical; Name=I" evidence="3">
    <location>
        <begin position="15"/>
        <end position="45"/>
    </location>
</feature>
<feature type="topological domain" description="Mitochondrial matrix" evidence="3">
    <location>
        <begin position="46"/>
        <end position="59"/>
    </location>
</feature>
<feature type="transmembrane region" description="Helical; Name=II" evidence="3">
    <location>
        <begin position="60"/>
        <end position="87"/>
    </location>
</feature>
<feature type="topological domain" description="Mitochondrial intermembrane" evidence="3">
    <location>
        <begin position="88"/>
        <end position="230"/>
    </location>
</feature>
<feature type="binding site" evidence="3">
    <location>
        <position position="161"/>
    </location>
    <ligand>
        <name>Cu cation</name>
        <dbReference type="ChEBI" id="CHEBI:23378"/>
        <label>A1</label>
    </ligand>
</feature>
<feature type="binding site" evidence="3">
    <location>
        <position position="196"/>
    </location>
    <ligand>
        <name>Cu cation</name>
        <dbReference type="ChEBI" id="CHEBI:23378"/>
        <label>A1</label>
    </ligand>
</feature>
<feature type="binding site" evidence="3">
    <location>
        <position position="196"/>
    </location>
    <ligand>
        <name>Cu cation</name>
        <dbReference type="ChEBI" id="CHEBI:23378"/>
        <label>A2</label>
    </ligand>
</feature>
<feature type="binding site" evidence="3">
    <location>
        <position position="198"/>
    </location>
    <ligand>
        <name>Cu cation</name>
        <dbReference type="ChEBI" id="CHEBI:23378"/>
        <label>A2</label>
    </ligand>
</feature>
<feature type="binding site" evidence="3">
    <location>
        <position position="198"/>
    </location>
    <ligand>
        <name>Mg(2+)</name>
        <dbReference type="ChEBI" id="CHEBI:18420"/>
        <note>ligand shared with MT-CO1</note>
    </ligand>
</feature>
<feature type="binding site" evidence="3">
    <location>
        <position position="200"/>
    </location>
    <ligand>
        <name>Cu cation</name>
        <dbReference type="ChEBI" id="CHEBI:23378"/>
        <label>A1</label>
    </ligand>
</feature>
<feature type="binding site" evidence="3">
    <location>
        <position position="200"/>
    </location>
    <ligand>
        <name>Cu cation</name>
        <dbReference type="ChEBI" id="CHEBI:23378"/>
        <label>A2</label>
    </ligand>
</feature>
<feature type="binding site" evidence="3">
    <location>
        <position position="204"/>
    </location>
    <ligand>
        <name>Cu cation</name>
        <dbReference type="ChEBI" id="CHEBI:23378"/>
        <label>A2</label>
    </ligand>
</feature>
<feature type="binding site" evidence="3">
    <location>
        <position position="207"/>
    </location>
    <ligand>
        <name>Cu cation</name>
        <dbReference type="ChEBI" id="CHEBI:23378"/>
        <label>A1</label>
    </ligand>
</feature>
<sequence length="230" mass="26093">MAHPTQLGFQDAASPVMEELLHFHDHALMIVFLISALVLYVIITTVSTKLTNMYILDSQEIEIVWTVLPALILILIALPSLRILYLMDEINDPHLTIKAMGHQWYWSYEYTDYENLSFDSYMIPTQDLTPGQFRLLETDHRMVVPMESPIRILVSAEDVLHSWALPAMGVKMDAVPGRLNQTAFIASRPGVFYGQCSEICGANHSFMPIVVEAVPLSHFENWSTLMLKDA</sequence>
<evidence type="ECO:0000250" key="1">
    <source>
        <dbReference type="UniProtKB" id="P00403"/>
    </source>
</evidence>
<evidence type="ECO:0000250" key="2">
    <source>
        <dbReference type="UniProtKB" id="P00410"/>
    </source>
</evidence>
<evidence type="ECO:0000250" key="3">
    <source>
        <dbReference type="UniProtKB" id="P68530"/>
    </source>
</evidence>
<evidence type="ECO:0000305" key="4"/>
<keyword id="KW-0186">Copper</keyword>
<keyword id="KW-0249">Electron transport</keyword>
<keyword id="KW-0460">Magnesium</keyword>
<keyword id="KW-0472">Membrane</keyword>
<keyword id="KW-0479">Metal-binding</keyword>
<keyword id="KW-0496">Mitochondrion</keyword>
<keyword id="KW-0999">Mitochondrion inner membrane</keyword>
<keyword id="KW-0679">Respiratory chain</keyword>
<keyword id="KW-1278">Translocase</keyword>
<keyword id="KW-0812">Transmembrane</keyword>
<keyword id="KW-1133">Transmembrane helix</keyword>
<keyword id="KW-0813">Transport</keyword>
<name>COX2_FORLA</name>
<proteinExistence type="inferred from homology"/>
<accession>P34189</accession>
<gene>
    <name type="primary">mt-co2</name>
    <name type="synonym">coii</name>
    <name type="synonym">coxii</name>
    <name type="synonym">mtco2</name>
</gene>